<evidence type="ECO:0000255" key="1">
    <source>
        <dbReference type="HAMAP-Rule" id="MF_00147"/>
    </source>
</evidence>
<dbReference type="EC" id="5.3.1.1" evidence="1"/>
<dbReference type="EMBL" id="CP000852">
    <property type="protein sequence ID" value="ABW01539.1"/>
    <property type="molecule type" value="Genomic_DNA"/>
</dbReference>
<dbReference type="RefSeq" id="WP_012185759.1">
    <property type="nucleotide sequence ID" value="NC_009954.1"/>
</dbReference>
<dbReference type="SMR" id="A8MCN3"/>
<dbReference type="STRING" id="397948.Cmaq_0703"/>
<dbReference type="GeneID" id="5709811"/>
<dbReference type="KEGG" id="cma:Cmaq_0703"/>
<dbReference type="eggNOG" id="arCOG01087">
    <property type="taxonomic scope" value="Archaea"/>
</dbReference>
<dbReference type="HOGENOM" id="CLU_104921_0_0_2"/>
<dbReference type="OrthoDB" id="9465at2157"/>
<dbReference type="UniPathway" id="UPA00109">
    <property type="reaction ID" value="UER00189"/>
</dbReference>
<dbReference type="UniPathway" id="UPA00138"/>
<dbReference type="Proteomes" id="UP000001137">
    <property type="component" value="Chromosome"/>
</dbReference>
<dbReference type="GO" id="GO:0005829">
    <property type="term" value="C:cytosol"/>
    <property type="evidence" value="ECO:0007669"/>
    <property type="project" value="TreeGrafter"/>
</dbReference>
<dbReference type="GO" id="GO:0004807">
    <property type="term" value="F:triose-phosphate isomerase activity"/>
    <property type="evidence" value="ECO:0007669"/>
    <property type="project" value="UniProtKB-UniRule"/>
</dbReference>
<dbReference type="GO" id="GO:0006094">
    <property type="term" value="P:gluconeogenesis"/>
    <property type="evidence" value="ECO:0007669"/>
    <property type="project" value="UniProtKB-UniRule"/>
</dbReference>
<dbReference type="GO" id="GO:0046166">
    <property type="term" value="P:glyceraldehyde-3-phosphate biosynthetic process"/>
    <property type="evidence" value="ECO:0007669"/>
    <property type="project" value="TreeGrafter"/>
</dbReference>
<dbReference type="GO" id="GO:0019563">
    <property type="term" value="P:glycerol catabolic process"/>
    <property type="evidence" value="ECO:0007669"/>
    <property type="project" value="TreeGrafter"/>
</dbReference>
<dbReference type="GO" id="GO:0006096">
    <property type="term" value="P:glycolytic process"/>
    <property type="evidence" value="ECO:0007669"/>
    <property type="project" value="UniProtKB-UniRule"/>
</dbReference>
<dbReference type="CDD" id="cd00311">
    <property type="entry name" value="TIM"/>
    <property type="match status" value="1"/>
</dbReference>
<dbReference type="FunFam" id="3.20.20.70:FF:000223">
    <property type="entry name" value="Triosephosphate isomerase"/>
    <property type="match status" value="1"/>
</dbReference>
<dbReference type="Gene3D" id="3.20.20.70">
    <property type="entry name" value="Aldolase class I"/>
    <property type="match status" value="1"/>
</dbReference>
<dbReference type="HAMAP" id="MF_00147_A">
    <property type="entry name" value="TIM_A"/>
    <property type="match status" value="1"/>
</dbReference>
<dbReference type="InterPro" id="IPR013785">
    <property type="entry name" value="Aldolase_TIM"/>
</dbReference>
<dbReference type="InterPro" id="IPR035990">
    <property type="entry name" value="TIM_sf"/>
</dbReference>
<dbReference type="InterPro" id="IPR000652">
    <property type="entry name" value="Triosephosphate_isomerase"/>
</dbReference>
<dbReference type="InterPro" id="IPR022891">
    <property type="entry name" value="Triosephosphate_isomerase_arc"/>
</dbReference>
<dbReference type="NCBIfam" id="NF003302">
    <property type="entry name" value="PRK04302.1"/>
    <property type="match status" value="1"/>
</dbReference>
<dbReference type="NCBIfam" id="TIGR00419">
    <property type="entry name" value="tim"/>
    <property type="match status" value="1"/>
</dbReference>
<dbReference type="PANTHER" id="PTHR21139">
    <property type="entry name" value="TRIOSEPHOSPHATE ISOMERASE"/>
    <property type="match status" value="1"/>
</dbReference>
<dbReference type="PANTHER" id="PTHR21139:SF42">
    <property type="entry name" value="TRIOSEPHOSPHATE ISOMERASE"/>
    <property type="match status" value="1"/>
</dbReference>
<dbReference type="Pfam" id="PF00121">
    <property type="entry name" value="TIM"/>
    <property type="match status" value="1"/>
</dbReference>
<dbReference type="SUPFAM" id="SSF51351">
    <property type="entry name" value="Triosephosphate isomerase (TIM)"/>
    <property type="match status" value="1"/>
</dbReference>
<dbReference type="PROSITE" id="PS51440">
    <property type="entry name" value="TIM_2"/>
    <property type="match status" value="1"/>
</dbReference>
<organism>
    <name type="scientific">Caldivirga maquilingensis (strain ATCC 700844 / DSM 13496 / JCM 10307 / IC-167)</name>
    <dbReference type="NCBI Taxonomy" id="397948"/>
    <lineage>
        <taxon>Archaea</taxon>
        <taxon>Thermoproteota</taxon>
        <taxon>Thermoprotei</taxon>
        <taxon>Thermoproteales</taxon>
        <taxon>Thermoproteaceae</taxon>
        <taxon>Caldivirga</taxon>
    </lineage>
</organism>
<protein>
    <recommendedName>
        <fullName evidence="1">Triosephosphate isomerase</fullName>
        <shortName evidence="1">TIM</shortName>
        <shortName evidence="1">TPI</shortName>
        <ecNumber evidence="1">5.3.1.1</ecNumber>
    </recommendedName>
    <alternativeName>
        <fullName evidence="1">Triose-phosphate isomerase</fullName>
    </alternativeName>
</protein>
<name>TPIS_CALMQ</name>
<feature type="chain" id="PRO_1000076636" description="Triosephosphate isomerase">
    <location>
        <begin position="1"/>
        <end position="225"/>
    </location>
</feature>
<feature type="active site" description="Electrophile" evidence="1">
    <location>
        <position position="93"/>
    </location>
</feature>
<feature type="active site" description="Proton acceptor" evidence="1">
    <location>
        <position position="141"/>
    </location>
</feature>
<feature type="binding site" evidence="1">
    <location>
        <begin position="9"/>
        <end position="11"/>
    </location>
    <ligand>
        <name>substrate</name>
    </ligand>
</feature>
<feature type="binding site" evidence="1">
    <location>
        <position position="146"/>
    </location>
    <ligand>
        <name>substrate</name>
    </ligand>
</feature>
<feature type="binding site" evidence="1">
    <location>
        <position position="181"/>
    </location>
    <ligand>
        <name>substrate</name>
    </ligand>
</feature>
<feature type="binding site" evidence="1">
    <location>
        <begin position="202"/>
        <end position="203"/>
    </location>
    <ligand>
        <name>substrate</name>
    </ligand>
</feature>
<comment type="function">
    <text evidence="1">Involved in the gluconeogenesis. Catalyzes stereospecifically the conversion of dihydroxyacetone phosphate (DHAP) to D-glyceraldehyde-3-phosphate (G3P).</text>
</comment>
<comment type="catalytic activity">
    <reaction evidence="1">
        <text>D-glyceraldehyde 3-phosphate = dihydroxyacetone phosphate</text>
        <dbReference type="Rhea" id="RHEA:18585"/>
        <dbReference type="ChEBI" id="CHEBI:57642"/>
        <dbReference type="ChEBI" id="CHEBI:59776"/>
        <dbReference type="EC" id="5.3.1.1"/>
    </reaction>
</comment>
<comment type="pathway">
    <text evidence="1">Carbohydrate biosynthesis; gluconeogenesis.</text>
</comment>
<comment type="pathway">
    <text evidence="1">Carbohydrate degradation; glycolysis; D-glyceraldehyde 3-phosphate from glycerone phosphate: step 1/1.</text>
</comment>
<comment type="subunit">
    <text evidence="1">Homotetramer; dimer of dimers.</text>
</comment>
<comment type="subcellular location">
    <subcellularLocation>
        <location evidence="1">Cytoplasm</location>
    </subcellularLocation>
</comment>
<comment type="similarity">
    <text evidence="1">Belongs to the triosephosphate isomerase family.</text>
</comment>
<proteinExistence type="inferred from homology"/>
<accession>A8MCN3</accession>
<reference key="1">
    <citation type="submission" date="2007-10" db="EMBL/GenBank/DDBJ databases">
        <title>Complete sequence of Caldivirga maquilingensis IC-167.</title>
        <authorList>
            <consortium name="US DOE Joint Genome Institute"/>
            <person name="Copeland A."/>
            <person name="Lucas S."/>
            <person name="Lapidus A."/>
            <person name="Barry K."/>
            <person name="Glavina del Rio T."/>
            <person name="Dalin E."/>
            <person name="Tice H."/>
            <person name="Pitluck S."/>
            <person name="Saunders E."/>
            <person name="Brettin T."/>
            <person name="Bruce D."/>
            <person name="Detter J.C."/>
            <person name="Han C."/>
            <person name="Schmutz J."/>
            <person name="Larimer F."/>
            <person name="Land M."/>
            <person name="Hauser L."/>
            <person name="Kyrpides N."/>
            <person name="Ivanova N."/>
            <person name="Biddle J.F."/>
            <person name="Zhang Z."/>
            <person name="Fitz-Gibbon S.T."/>
            <person name="Lowe T.M."/>
            <person name="Saltikov C."/>
            <person name="House C.H."/>
            <person name="Richardson P."/>
        </authorList>
    </citation>
    <scope>NUCLEOTIDE SEQUENCE [LARGE SCALE GENOMIC DNA]</scope>
    <source>
        <strain>ATCC 700844 / DSM 13496 / JCM 10307 / IC-167</strain>
    </source>
</reference>
<sequence>MKVPVLIINMKAYPELLGGGAVKLAQVAEKVANNLGASIIVAPPHTYLRQVAESVNIPVYAQSADPVDPGARTGHIPLEFIKDAGASGVIINHSEHRLLLNDIAMLVNKAKALNLETVVCSPDPLSSAAAAALAPTAVAMEPPELIGTGKSVSRTKPDVVVETVNAVKRVNGDVKVITGAGIEDYNDVAKAIELGTVGVLVASAIVKAKDWEAKITELAKPLVGK</sequence>
<keyword id="KW-0963">Cytoplasm</keyword>
<keyword id="KW-0312">Gluconeogenesis</keyword>
<keyword id="KW-0324">Glycolysis</keyword>
<keyword id="KW-0413">Isomerase</keyword>
<keyword id="KW-1185">Reference proteome</keyword>
<gene>
    <name evidence="1" type="primary">tpiA</name>
    <name type="ordered locus">Cmaq_0703</name>
</gene>